<evidence type="ECO:0000250" key="1"/>
<evidence type="ECO:0000250" key="2">
    <source>
        <dbReference type="UniProtKB" id="P78536"/>
    </source>
</evidence>
<evidence type="ECO:0000250" key="3">
    <source>
        <dbReference type="UniProtKB" id="Q9Z0F8"/>
    </source>
</evidence>
<evidence type="ECO:0000255" key="4"/>
<evidence type="ECO:0000255" key="5">
    <source>
        <dbReference type="PROSITE-ProRule" id="PRU00068"/>
    </source>
</evidence>
<evidence type="ECO:0000255" key="6">
    <source>
        <dbReference type="PROSITE-ProRule" id="PRU00276"/>
    </source>
</evidence>
<evidence type="ECO:0000256" key="7">
    <source>
        <dbReference type="SAM" id="MobiDB-lite"/>
    </source>
</evidence>
<evidence type="ECO:0000269" key="8">
    <source>
    </source>
</evidence>
<evidence type="ECO:0000305" key="9"/>
<reference key="1">
    <citation type="submission" date="2006-09" db="EMBL/GenBank/DDBJ databases">
        <title>Sequences and genetic variations of fourty-four porcine coat color related genes.</title>
        <authorList>
            <person name="Okumura N."/>
            <person name="Matsumoto T."/>
            <person name="Hamasima N."/>
            <person name="Uenishi H."/>
            <person name="Ogawa T."/>
            <person name="Komatsuda A."/>
            <person name="Fukudome N."/>
            <person name="Ide H."/>
            <person name="Suzuki A."/>
            <person name="Kojima C."/>
            <person name="Awata T."/>
        </authorList>
    </citation>
    <scope>NUCLEOTIDE SEQUENCE [MRNA]</scope>
</reference>
<reference key="2">
    <citation type="journal article" date="1999" name="Matrix Biol.">
        <title>Effects of culture conditions and exposure to catabolic stimulators (IL-1 and retinoic acid) on the expression of matrix metalloproteinases (MMPs) and disintegrin metalloproteinases (ADAMs) by articular cartilage chondrocytes.</title>
        <authorList>
            <person name="Flannery C.R."/>
            <person name="Little C.B."/>
            <person name="Caterson B."/>
            <person name="Hughes C.E."/>
        </authorList>
    </citation>
    <scope>NUCLEOTIDE SEQUENCE [MRNA] OF 316-427</scope>
</reference>
<reference key="3">
    <citation type="journal article" date="2021" name="PLoS Pathog.">
        <title>ADAM17 is an essential attachment factor for classical swine fever virus.</title>
        <authorList>
            <person name="Yuan F."/>
            <person name="Li D."/>
            <person name="Li C."/>
            <person name="Zhang Y."/>
            <person name="Song H."/>
            <person name="Li S."/>
            <person name="Deng H."/>
            <person name="Gao G.F."/>
            <person name="Zheng A."/>
        </authorList>
    </citation>
    <scope>FUNCTION (MICROBIAL INFECTION)</scope>
    <scope>INTERACTION WITH CLASSICAL SWINE FEVER VIRUS ENVELOPE GLYCOPROTEIN E2 (MICROBIAL INFECTION)</scope>
</reference>
<sequence>MRQCALFLTSLVPIVLAPRPPDEPGFGSPQRLEKLDSLLSDYDILSLSSIRQHSVRKRDLQASTHLETLLTFSALNRHFKLYLTSSTERFSQNFKVVVVDGEDESEYPVKWQDFFSGHVVGEPDSRVLAHIGDDDITVRINTDGAEYNIEPLWRLINDTKDKRVLVYKSEDIKNVSRLQSPKVCGYIKADNEELLPKGLVDREPPDELVHRVKRRADPNPLRNTCKLLVVADHRFYKYMGRGEESTTTNYLIELIDRVDDIYRNTSWDNAGFKGYGIQIEQIRILKSPQEVKPGERHYNMAKSYPNEEKDAWDVKMLLEQFSFDIAEEASKVCLAHLFTYQDFDMGTLGLAYVGSPRANSHGGVCPKAYYSPIGKKNIYLNSGLTSTKNYGKTILTKEADLVTTHELGHNFGAEHDPDGLAECAPNEDQGGKYVMYPIAVSGDHENNKMFSNCSKQSIYKTIESKAQECFQERSNKVCGNSRVDEGEECDPGIMYLNNDTCCNSDCTLRPGVQCSDRNSPCCKNCQFETAQKKCQEAINATCKGVSYCTGNSSECPPPGNAEDDTVCLDLGRCKDGKCVPFCEREQRLESCACNETDHSCKVCCRAPSGRCLPYVDAEQKNLFLRKGKPCTVGFCDMNGKCEKRVQDVIERFWEFIDKLSINTFGKFLADNIVGSVLVFSLMLWIPVSILVHCVDKKLDKQYESLSLLHPSNVEMLSSMDSASVRIIKPFPAPQTPGRLQPLQPLQPGPVLPSAPSVPVAPKLDHQRMDTIQEDPSTDSHVDEDGFEKDPFPNSSAAAKSFEDLTDHPVTRSEKASSFKLQRQSRVDSKETEC</sequence>
<comment type="function">
    <text evidence="2 3">Transmembrane metalloprotease which mediates the ectodomain shedding of a myriad of transmembrane proteins including adhesion proteins, growth factor precursors and cytokines important for inflammation and immunity (By similarity). Cleaves the membrane-bound precursor of TNF-alpha to its mature soluble form. Responsible for the proteolytical release of soluble JAM3 from endothelial cells surface. Responsible for the proteolytic release of several other cell-surface proteins, including p75 TNF-receptor, interleukin 1 receptor type II, p55 TNF-receptor, transforming growth factor-alpha, L-selectin, growth hormone receptor, MUC1 and the amyloid precursor protein. Acts as an activator of Notch pathway by mediating cleavage of Notch, generating the membrane-associated intermediate fragment called Notch extracellular truncation (NEXT). Plays a role in the proteolytic processing of ACE2 (By similarity). Plays a role in hemostasis through shedding of GP1BA, the platelet glycoprotein Ib alpha chain (By similarity). Mediates the proteolytic cleavage of LAG3, leading to release the secreted form of LAG3 (By similarity). Mediates the proteolytic cleavage of IL6R, leading to the release of secreted form of IL6R. Mediates the proteolytic cleavage and shedding of FCGR3A upon NK cell stimulation, a mechanism that allows for increased NK cell motility and detachment from opsonized target cells (By similarity). Cleaves TREM2, resulting in shedding of the TREM2 ectodomain (By similarity).</text>
</comment>
<comment type="function">
    <text evidence="8">(Microbial infection) Acts as a receptor for classical swine fever virus.</text>
</comment>
<comment type="catalytic activity">
    <reaction evidence="2">
        <text>Narrow endopeptidase specificity. Cleaves Pro-Leu-Ala-Gln-Ala-|-Val-Arg-Ser-Ser-Ser in the membrane-bound, 26-kDa form of tumor necrosis factor alpha (TNFalpha). Similarly cleaves other membrane-anchored, cell-surface proteins to 'shed' the extracellular domains.</text>
        <dbReference type="EC" id="3.4.24.86"/>
    </reaction>
</comment>
<comment type="cofactor">
    <cofactor evidence="2">
        <name>Zn(2+)</name>
        <dbReference type="ChEBI" id="CHEBI:29105"/>
    </cofactor>
    <text evidence="2">Binds 1 zinc ion per subunit.</text>
</comment>
<comment type="subunit">
    <text evidence="8">(Microbial infection) Interacts (via metalloproteinase domain) with classical swine fever virus envelope glycoprotein E2; this interaction allows binding and probably entry of the virus into the cell.</text>
</comment>
<comment type="subunit">
    <text evidence="2">Interacts with MAD2L1, MAPK14 and MUC1. Interacts with iRhom1/RHBDF1 and iRhom2/RHBDF2. Interacts with FRMD8 via its interaction with iRhom1/RHBDF1 and iRhom2/RHBDF2.</text>
</comment>
<comment type="subcellular location">
    <subcellularLocation>
        <location evidence="4">Membrane</location>
        <topology evidence="4">Single-pass type I membrane protein</topology>
    </subcellularLocation>
</comment>
<comment type="domain">
    <text evidence="1">Must be membrane anchored to cleave the different substrates. The cytoplasmic domain is not required for the this activity. Only the catalytic domain is essential to shed TNF and p75 TNFR (By similarity).</text>
</comment>
<comment type="PTM">
    <text evidence="1">The precursor is cleaved by a furin endopeptidase.</text>
</comment>
<comment type="PTM">
    <text evidence="2">Phosphorylated.</text>
</comment>
<feature type="signal peptide" evidence="4">
    <location>
        <begin position="1"/>
        <end position="17"/>
    </location>
</feature>
<feature type="chain" id="PRO_0000078207" description="Disintegrin and metalloproteinase domain-containing protein 17">
    <location>
        <begin position="18"/>
        <end position="833"/>
    </location>
</feature>
<feature type="transmembrane region" description="Helical" evidence="4">
    <location>
        <begin position="672"/>
        <end position="692"/>
    </location>
</feature>
<feature type="domain" description="Peptidase M12B" evidence="6">
    <location>
        <begin position="223"/>
        <end position="474"/>
    </location>
</feature>
<feature type="domain" description="Disintegrin" evidence="5">
    <location>
        <begin position="475"/>
        <end position="563"/>
    </location>
</feature>
<feature type="region of interest" description="Interaction with classical swine fever virus envelope glycoprotein E2" evidence="8">
    <location>
        <begin position="301"/>
        <end position="345"/>
    </location>
</feature>
<feature type="region of interest" description="Disordered" evidence="7">
    <location>
        <begin position="735"/>
        <end position="760"/>
    </location>
</feature>
<feature type="region of interest" description="Disordered" evidence="7">
    <location>
        <begin position="772"/>
        <end position="833"/>
    </location>
</feature>
<feature type="compositionally biased region" description="Basic and acidic residues" evidence="7">
    <location>
        <begin position="777"/>
        <end position="790"/>
    </location>
</feature>
<feature type="compositionally biased region" description="Basic and acidic residues" evidence="7">
    <location>
        <begin position="800"/>
        <end position="816"/>
    </location>
</feature>
<feature type="compositionally biased region" description="Basic and acidic residues" evidence="7">
    <location>
        <begin position="824"/>
        <end position="833"/>
    </location>
</feature>
<feature type="active site" evidence="6">
    <location>
        <position position="406"/>
    </location>
</feature>
<feature type="binding site" evidence="2">
    <location>
        <position position="405"/>
    </location>
    <ligand>
        <name>Zn(2+)</name>
        <dbReference type="ChEBI" id="CHEBI:29105"/>
        <note>catalytic</note>
    </ligand>
</feature>
<feature type="binding site" evidence="2">
    <location>
        <position position="409"/>
    </location>
    <ligand>
        <name>Zn(2+)</name>
        <dbReference type="ChEBI" id="CHEBI:29105"/>
        <note>catalytic</note>
    </ligand>
</feature>
<feature type="binding site" evidence="2">
    <location>
        <position position="415"/>
    </location>
    <ligand>
        <name>Zn(2+)</name>
        <dbReference type="ChEBI" id="CHEBI:29105"/>
        <note>catalytic</note>
    </ligand>
</feature>
<feature type="disulfide bond" evidence="6">
    <location>
        <begin position="365"/>
        <end position="469"/>
    </location>
</feature>
<feature type="disulfide bond" evidence="6">
    <location>
        <begin position="423"/>
        <end position="453"/>
    </location>
</feature>
<feature type="disulfide bond" evidence="5">
    <location>
        <begin position="534"/>
        <end position="555"/>
    </location>
</feature>
<feature type="sequence conflict" description="In Ref. 1; AAC23532." evidence="9" ref="1">
    <original>L</original>
    <variation>R</variation>
    <location>
        <position position="318"/>
    </location>
</feature>
<protein>
    <recommendedName>
        <fullName>Disintegrin and metalloproteinase domain-containing protein 17</fullName>
        <shortName>ADAM 17</shortName>
        <ecNumber evidence="2">3.4.24.86</ecNumber>
    </recommendedName>
    <alternativeName>
        <fullName>TNF-alpha convertase</fullName>
    </alternativeName>
    <alternativeName>
        <fullName>TNF-alpha-converting enzyme</fullName>
    </alternativeName>
    <cdAntigenName>CD156b</cdAntigenName>
</protein>
<organism>
    <name type="scientific">Sus scrofa</name>
    <name type="common">Pig</name>
    <dbReference type="NCBI Taxonomy" id="9823"/>
    <lineage>
        <taxon>Eukaryota</taxon>
        <taxon>Metazoa</taxon>
        <taxon>Chordata</taxon>
        <taxon>Craniata</taxon>
        <taxon>Vertebrata</taxon>
        <taxon>Euteleostomi</taxon>
        <taxon>Mammalia</taxon>
        <taxon>Eutheria</taxon>
        <taxon>Laurasiatheria</taxon>
        <taxon>Artiodactyla</taxon>
        <taxon>Suina</taxon>
        <taxon>Suidae</taxon>
        <taxon>Sus</taxon>
    </lineage>
</organism>
<dbReference type="EC" id="3.4.24.86" evidence="2"/>
<dbReference type="EMBL" id="AF069648">
    <property type="protein sequence ID" value="AAC23532.1"/>
    <property type="molecule type" value="mRNA"/>
</dbReference>
<dbReference type="EMBL" id="AB271919">
    <property type="protein sequence ID" value="BAF62294.1"/>
    <property type="molecule type" value="mRNA"/>
</dbReference>
<dbReference type="RefSeq" id="NP_001093396.1">
    <property type="nucleotide sequence ID" value="NM_001099926.1"/>
</dbReference>
<dbReference type="SMR" id="O77636"/>
<dbReference type="STRING" id="9823.ENSSSCP00000009208"/>
<dbReference type="BindingDB" id="O77636"/>
<dbReference type="ChEMBL" id="CHEMBL3332"/>
<dbReference type="MEROPS" id="M12.217"/>
<dbReference type="PaxDb" id="9823-ENSSSCP00000009208"/>
<dbReference type="PeptideAtlas" id="O77636"/>
<dbReference type="Ensembl" id="ENSSSCT00030074604.1">
    <property type="protein sequence ID" value="ENSSSCP00030034130.1"/>
    <property type="gene ID" value="ENSSSCG00030053402.1"/>
</dbReference>
<dbReference type="Ensembl" id="ENSSSCT00060070378.1">
    <property type="protein sequence ID" value="ENSSSCP00060030379.1"/>
    <property type="gene ID" value="ENSSSCG00060051678.1"/>
</dbReference>
<dbReference type="Ensembl" id="ENSSSCT00085047998">
    <property type="protein sequence ID" value="ENSSSCP00085033549"/>
    <property type="gene ID" value="ENSSSCG00085025006"/>
</dbReference>
<dbReference type="Ensembl" id="ENSSSCT00115010640">
    <property type="protein sequence ID" value="ENSSSCP00115010030"/>
    <property type="gene ID" value="ENSSSCG00115006108"/>
</dbReference>
<dbReference type="GeneID" id="397343"/>
<dbReference type="KEGG" id="ssc:397343"/>
<dbReference type="CTD" id="6868"/>
<dbReference type="eggNOG" id="KOG3658">
    <property type="taxonomic scope" value="Eukaryota"/>
</dbReference>
<dbReference type="InParanoid" id="O77636"/>
<dbReference type="OrthoDB" id="2131567at2759"/>
<dbReference type="BRENDA" id="3.4.24.86">
    <property type="organism ID" value="6170"/>
</dbReference>
<dbReference type="Proteomes" id="UP000008227">
    <property type="component" value="Unplaced"/>
</dbReference>
<dbReference type="Proteomes" id="UP000314985">
    <property type="component" value="Unplaced"/>
</dbReference>
<dbReference type="Proteomes" id="UP000694570">
    <property type="component" value="Unplaced"/>
</dbReference>
<dbReference type="Proteomes" id="UP000694571">
    <property type="component" value="Unplaced"/>
</dbReference>
<dbReference type="Proteomes" id="UP000694720">
    <property type="component" value="Unplaced"/>
</dbReference>
<dbReference type="Proteomes" id="UP000694722">
    <property type="component" value="Unplaced"/>
</dbReference>
<dbReference type="Proteomes" id="UP000694723">
    <property type="component" value="Unplaced"/>
</dbReference>
<dbReference type="Proteomes" id="UP000694724">
    <property type="component" value="Unplaced"/>
</dbReference>
<dbReference type="Proteomes" id="UP000694725">
    <property type="component" value="Unplaced"/>
</dbReference>
<dbReference type="Proteomes" id="UP000694726">
    <property type="component" value="Unplaced"/>
</dbReference>
<dbReference type="Proteomes" id="UP000694727">
    <property type="component" value="Unplaced"/>
</dbReference>
<dbReference type="Proteomes" id="UP000694728">
    <property type="component" value="Unplaced"/>
</dbReference>
<dbReference type="GO" id="GO:0005886">
    <property type="term" value="C:plasma membrane"/>
    <property type="evidence" value="ECO:0000250"/>
    <property type="project" value="UniProtKB"/>
</dbReference>
<dbReference type="GO" id="GO:0004175">
    <property type="term" value="F:endopeptidase activity"/>
    <property type="evidence" value="ECO:0000250"/>
    <property type="project" value="UniProtKB"/>
</dbReference>
<dbReference type="GO" id="GO:0046872">
    <property type="term" value="F:metal ion binding"/>
    <property type="evidence" value="ECO:0007669"/>
    <property type="project" value="UniProtKB-KW"/>
</dbReference>
<dbReference type="GO" id="GO:0004222">
    <property type="term" value="F:metalloendopeptidase activity"/>
    <property type="evidence" value="ECO:0000315"/>
    <property type="project" value="BHF-UCL"/>
</dbReference>
<dbReference type="GO" id="GO:0005112">
    <property type="term" value="F:Notch binding"/>
    <property type="evidence" value="ECO:0000250"/>
    <property type="project" value="UniProtKB"/>
</dbReference>
<dbReference type="GO" id="GO:0006509">
    <property type="term" value="P:membrane protein ectodomain proteolysis"/>
    <property type="evidence" value="ECO:0000315"/>
    <property type="project" value="BHF-UCL"/>
</dbReference>
<dbReference type="GO" id="GO:0007220">
    <property type="term" value="P:Notch receptor processing"/>
    <property type="evidence" value="ECO:0000250"/>
    <property type="project" value="UniProtKB"/>
</dbReference>
<dbReference type="GO" id="GO:0007219">
    <property type="term" value="P:Notch signaling pathway"/>
    <property type="evidence" value="ECO:0000318"/>
    <property type="project" value="GO_Central"/>
</dbReference>
<dbReference type="GO" id="GO:0070374">
    <property type="term" value="P:positive regulation of ERK1 and ERK2 cascade"/>
    <property type="evidence" value="ECO:0000315"/>
    <property type="project" value="AgBase"/>
</dbReference>
<dbReference type="GO" id="GO:0006508">
    <property type="term" value="P:proteolysis"/>
    <property type="evidence" value="ECO:0000250"/>
    <property type="project" value="UniProtKB"/>
</dbReference>
<dbReference type="GO" id="GO:0033209">
    <property type="term" value="P:tumor necrosis factor-mediated signaling pathway"/>
    <property type="evidence" value="ECO:0000315"/>
    <property type="project" value="AgBase"/>
</dbReference>
<dbReference type="CDD" id="cd14246">
    <property type="entry name" value="ADAM17_MPD"/>
    <property type="match status" value="1"/>
</dbReference>
<dbReference type="CDD" id="cd04270">
    <property type="entry name" value="ZnMc_TACE_like"/>
    <property type="match status" value="1"/>
</dbReference>
<dbReference type="FunFam" id="3.40.390.10:FF:000017">
    <property type="entry name" value="Disintegrin and metalloproteinase domain-containing protein 17"/>
    <property type="match status" value="1"/>
</dbReference>
<dbReference type="FunFam" id="4.10.70.10:FF:000003">
    <property type="entry name" value="Disintegrin and metalloproteinase domain-containing protein 17"/>
    <property type="match status" value="1"/>
</dbReference>
<dbReference type="FunFam" id="4.10.70.30:FF:000002">
    <property type="entry name" value="Disintegrin and metalloproteinase domain-containing protein 17"/>
    <property type="match status" value="1"/>
</dbReference>
<dbReference type="Gene3D" id="4.10.70.30">
    <property type="match status" value="1"/>
</dbReference>
<dbReference type="Gene3D" id="3.40.390.10">
    <property type="entry name" value="Collagenase (Catalytic Domain)"/>
    <property type="match status" value="1"/>
</dbReference>
<dbReference type="Gene3D" id="4.10.70.10">
    <property type="entry name" value="Disintegrin domain"/>
    <property type="match status" value="1"/>
</dbReference>
<dbReference type="InterPro" id="IPR034025">
    <property type="entry name" value="ADAM10_ADAM17"/>
</dbReference>
<dbReference type="InterPro" id="IPR032029">
    <property type="entry name" value="ADAM17_MPD"/>
</dbReference>
<dbReference type="InterPro" id="IPR051489">
    <property type="entry name" value="ADAM_Metalloproteinase"/>
</dbReference>
<dbReference type="InterPro" id="IPR001762">
    <property type="entry name" value="Disintegrin_dom"/>
</dbReference>
<dbReference type="InterPro" id="IPR036436">
    <property type="entry name" value="Disintegrin_dom_sf"/>
</dbReference>
<dbReference type="InterPro" id="IPR024079">
    <property type="entry name" value="MetalloPept_cat_dom_sf"/>
</dbReference>
<dbReference type="InterPro" id="IPR001590">
    <property type="entry name" value="Peptidase_M12B"/>
</dbReference>
<dbReference type="PANTHER" id="PTHR45702">
    <property type="entry name" value="ADAM10/ADAM17 METALLOPEPTIDASE FAMILY MEMBER"/>
    <property type="match status" value="1"/>
</dbReference>
<dbReference type="PANTHER" id="PTHR45702:SF6">
    <property type="entry name" value="DISINTEGRIN AND METALLOPROTEINASE DOMAIN-CONTAINING PROTEIN 17"/>
    <property type="match status" value="1"/>
</dbReference>
<dbReference type="Pfam" id="PF16698">
    <property type="entry name" value="ADAM17_MPD"/>
    <property type="match status" value="1"/>
</dbReference>
<dbReference type="Pfam" id="PF00200">
    <property type="entry name" value="Disintegrin"/>
    <property type="match status" value="1"/>
</dbReference>
<dbReference type="Pfam" id="PF13688">
    <property type="entry name" value="Reprolysin_5"/>
    <property type="match status" value="1"/>
</dbReference>
<dbReference type="SMART" id="SM00050">
    <property type="entry name" value="DISIN"/>
    <property type="match status" value="1"/>
</dbReference>
<dbReference type="SUPFAM" id="SSF57552">
    <property type="entry name" value="Blood coagulation inhibitor (disintegrin)"/>
    <property type="match status" value="1"/>
</dbReference>
<dbReference type="SUPFAM" id="SSF55486">
    <property type="entry name" value="Metalloproteases ('zincins'), catalytic domain"/>
    <property type="match status" value="1"/>
</dbReference>
<dbReference type="PROSITE" id="PS50215">
    <property type="entry name" value="ADAM_MEPRO"/>
    <property type="match status" value="1"/>
</dbReference>
<dbReference type="PROSITE" id="PS50214">
    <property type="entry name" value="DISINTEGRIN_2"/>
    <property type="match status" value="1"/>
</dbReference>
<dbReference type="PROSITE" id="PS00142">
    <property type="entry name" value="ZINC_PROTEASE"/>
    <property type="match status" value="1"/>
</dbReference>
<gene>
    <name type="primary">ADAM17</name>
    <name type="synonym">TACE</name>
</gene>
<proteinExistence type="evidence at protein level"/>
<keyword id="KW-1015">Disulfide bond</keyword>
<keyword id="KW-0378">Hydrolase</keyword>
<keyword id="KW-0472">Membrane</keyword>
<keyword id="KW-0479">Metal-binding</keyword>
<keyword id="KW-0482">Metalloprotease</keyword>
<keyword id="KW-0914">Notch signaling pathway</keyword>
<keyword id="KW-0597">Phosphoprotein</keyword>
<keyword id="KW-0645">Protease</keyword>
<keyword id="KW-1185">Reference proteome</keyword>
<keyword id="KW-0732">Signal</keyword>
<keyword id="KW-0812">Transmembrane</keyword>
<keyword id="KW-1133">Transmembrane helix</keyword>
<keyword id="KW-0862">Zinc</keyword>
<name>ADA17_PIG</name>
<accession>O77636</accession>
<accession>A5A749</accession>